<evidence type="ECO:0000255" key="1">
    <source>
        <dbReference type="HAMAP-Rule" id="MF_01204"/>
    </source>
</evidence>
<keyword id="KW-0285">Flavoprotein</keyword>
<keyword id="KW-0288">FMN</keyword>
<keyword id="KW-0520">NAD</keyword>
<keyword id="KW-0521">NADP</keyword>
<keyword id="KW-0560">Oxidoreductase</keyword>
<organism>
    <name type="scientific">Xanthomonas oryzae pv. oryzae (strain PXO99A)</name>
    <dbReference type="NCBI Taxonomy" id="360094"/>
    <lineage>
        <taxon>Bacteria</taxon>
        <taxon>Pseudomonadati</taxon>
        <taxon>Pseudomonadota</taxon>
        <taxon>Gammaproteobacteria</taxon>
        <taxon>Lysobacterales</taxon>
        <taxon>Lysobacteraceae</taxon>
        <taxon>Xanthomonas</taxon>
    </lineage>
</organism>
<protein>
    <recommendedName>
        <fullName evidence="1">Putative NADH dehydrogenase/NAD(P)H nitroreductase PXO_03909</fullName>
        <ecNumber evidence="1">1.-.-.-</ecNumber>
    </recommendedName>
</protein>
<comment type="cofactor">
    <cofactor evidence="1">
        <name>FMN</name>
        <dbReference type="ChEBI" id="CHEBI:58210"/>
    </cofactor>
</comment>
<comment type="similarity">
    <text evidence="1">Belongs to the nitroreductase family. HadB/RutE subfamily.</text>
</comment>
<reference key="1">
    <citation type="journal article" date="2008" name="BMC Genomics">
        <title>Genome sequence and rapid evolution of the rice pathogen Xanthomonas oryzae pv. oryzae PXO99A.</title>
        <authorList>
            <person name="Salzberg S.L."/>
            <person name="Sommer D.D."/>
            <person name="Schatz M.C."/>
            <person name="Phillippy A.M."/>
            <person name="Rabinowicz P.D."/>
            <person name="Tsuge S."/>
            <person name="Furutani A."/>
            <person name="Ochiai H."/>
            <person name="Delcher A.L."/>
            <person name="Kelley D."/>
            <person name="Madupu R."/>
            <person name="Puiu D."/>
            <person name="Radune D."/>
            <person name="Shumway M."/>
            <person name="Trapnell C."/>
            <person name="Aparna G."/>
            <person name="Jha G."/>
            <person name="Pandey A."/>
            <person name="Patil P.B."/>
            <person name="Ishihara H."/>
            <person name="Meyer D.F."/>
            <person name="Szurek B."/>
            <person name="Verdier V."/>
            <person name="Koebnik R."/>
            <person name="Dow J.M."/>
            <person name="Ryan R.P."/>
            <person name="Hirata H."/>
            <person name="Tsuyumu S."/>
            <person name="Won Lee S."/>
            <person name="Seo Y.-S."/>
            <person name="Sriariyanum M."/>
            <person name="Ronald P.C."/>
            <person name="Sonti R.V."/>
            <person name="Van Sluys M.-A."/>
            <person name="Leach J.E."/>
            <person name="White F.F."/>
            <person name="Bogdanove A.J."/>
        </authorList>
    </citation>
    <scope>NUCLEOTIDE SEQUENCE [LARGE SCALE GENOMIC DNA]</scope>
    <source>
        <strain>PXO99A</strain>
    </source>
</reference>
<dbReference type="EC" id="1.-.-.-" evidence="1"/>
<dbReference type="EMBL" id="CP000967">
    <property type="protein sequence ID" value="ACD57186.1"/>
    <property type="molecule type" value="Genomic_DNA"/>
</dbReference>
<dbReference type="RefSeq" id="WP_012443887.1">
    <property type="nucleotide sequence ID" value="NC_010717.2"/>
</dbReference>
<dbReference type="SMR" id="B2SK49"/>
<dbReference type="KEGG" id="xop:PXO_03909"/>
<dbReference type="eggNOG" id="COG0778">
    <property type="taxonomic scope" value="Bacteria"/>
</dbReference>
<dbReference type="HOGENOM" id="CLU_084441_0_0_6"/>
<dbReference type="Proteomes" id="UP000001740">
    <property type="component" value="Chromosome"/>
</dbReference>
<dbReference type="GO" id="GO:0016491">
    <property type="term" value="F:oxidoreductase activity"/>
    <property type="evidence" value="ECO:0007669"/>
    <property type="project" value="UniProtKB-UniRule"/>
</dbReference>
<dbReference type="CDD" id="cd02148">
    <property type="entry name" value="RutE-like"/>
    <property type="match status" value="1"/>
</dbReference>
<dbReference type="Gene3D" id="3.40.109.10">
    <property type="entry name" value="NADH Oxidase"/>
    <property type="match status" value="1"/>
</dbReference>
<dbReference type="HAMAP" id="MF_01204">
    <property type="entry name" value="Oxidoreductase_RutE_HadB"/>
    <property type="match status" value="1"/>
</dbReference>
<dbReference type="InterPro" id="IPR029479">
    <property type="entry name" value="Nitroreductase"/>
</dbReference>
<dbReference type="InterPro" id="IPR000415">
    <property type="entry name" value="Nitroreductase-like"/>
</dbReference>
<dbReference type="InterPro" id="IPR050461">
    <property type="entry name" value="Nitroreductase_HadB/RutE"/>
</dbReference>
<dbReference type="InterPro" id="IPR023936">
    <property type="entry name" value="RutE-like"/>
</dbReference>
<dbReference type="NCBIfam" id="NF003768">
    <property type="entry name" value="PRK05365.1"/>
    <property type="match status" value="1"/>
</dbReference>
<dbReference type="PANTHER" id="PTHR43543">
    <property type="entry name" value="MALONIC SEMIALDEHYDE REDUCTASE RUTE-RELATED"/>
    <property type="match status" value="1"/>
</dbReference>
<dbReference type="PANTHER" id="PTHR43543:SF1">
    <property type="entry name" value="MALONIC SEMIALDEHYDE REDUCTASE RUTE-RELATED"/>
    <property type="match status" value="1"/>
</dbReference>
<dbReference type="Pfam" id="PF00881">
    <property type="entry name" value="Nitroreductase"/>
    <property type="match status" value="1"/>
</dbReference>
<dbReference type="SUPFAM" id="SSF55469">
    <property type="entry name" value="FMN-dependent nitroreductase-like"/>
    <property type="match status" value="1"/>
</dbReference>
<feature type="chain" id="PRO_1000138706" description="Putative NADH dehydrogenase/NAD(P)H nitroreductase PXO_03909">
    <location>
        <begin position="1"/>
        <end position="196"/>
    </location>
</feature>
<name>Y3909_XANOP</name>
<accession>B2SK49</accession>
<sequence>MSDSLNAAALDQLFRTARTQNAFADTPVSQEVLRELYELVKWGSTAANSGPARFVFVTSADGKAKLKPALSEGNAAKTLAAPVTVIVAHDEDFHEKLPYLFPHADAKSWFDGPREGRAESAFRNGSLQGAYLILAARALGLDAGPMSGFDNAKVDAAFFAGTPIKSNFLVNLGYGDPAGLFPRSPRLSFDEAARFE</sequence>
<proteinExistence type="inferred from homology"/>
<gene>
    <name type="ordered locus">PXO_03909</name>
</gene>